<protein>
    <recommendedName>
        <fullName>Probable protein E5A</fullName>
    </recommendedName>
</protein>
<organismHost>
    <name type="scientific">Homo sapiens</name>
    <name type="common">Human</name>
    <dbReference type="NCBI Taxonomy" id="9606"/>
</organismHost>
<comment type="similarity">
    <text evidence="1">Belongs to the papillomaviridae E5A protein family.</text>
</comment>
<organism>
    <name type="scientific">Human papillomavirus type 6c</name>
    <dbReference type="NCBI Taxonomy" id="10601"/>
    <lineage>
        <taxon>Viruses</taxon>
        <taxon>Monodnaviria</taxon>
        <taxon>Shotokuvirae</taxon>
        <taxon>Cossaviricota</taxon>
        <taxon>Papovaviricetes</taxon>
        <taxon>Zurhausenvirales</taxon>
        <taxon>Papillomaviridae</taxon>
        <taxon>Firstpapillomavirinae</taxon>
        <taxon>Alphapapillomavirus</taxon>
        <taxon>Alphapapillomavirus 10</taxon>
    </lineage>
</organism>
<feature type="chain" id="PRO_0000133310" description="Probable protein E5A">
    <location>
        <begin position="1"/>
        <end position="91"/>
    </location>
</feature>
<name>VE5A_HPV6C</name>
<accession>P20970</accession>
<reference key="1">
    <citation type="journal article" date="1989" name="Virus Genes">
        <title>Structural analysis of human papillomavirus type 6c isolates from condyloma acuminatum and juvenile-onset and adult-onset laryngeal papillomata.</title>
        <authorList>
            <person name="Metcalfe L."/>
            <person name="Chen S.-L."/>
            <person name="Mounts P."/>
        </authorList>
    </citation>
    <scope>NUCLEOTIDE SEQUENCE [GENOMIC DNA]</scope>
    <source>
        <strain>Isolates HPV-6C/[GT,ART]</strain>
    </source>
</reference>
<evidence type="ECO:0000305" key="1"/>
<proteinExistence type="inferred from homology"/>
<sequence length="91" mass="10264">MEVVPVQIAAATTTTLILPVVIAFAVCILSIVLIILISDFLVYTSVLVLTLLLYLLLWLLLTTPLQFFLLTLCVCYFPAFYIHIYIVQTQQ</sequence>
<keyword id="KW-0244">Early protein</keyword>
<dbReference type="EMBL" id="M26656">
    <property type="protein sequence ID" value="AAA47012.1"/>
    <property type="molecule type" value="Genomic_DNA"/>
</dbReference>
<dbReference type="PIR" id="A61055">
    <property type="entry name" value="A61055"/>
</dbReference>
<dbReference type="SMR" id="P20970"/>
<dbReference type="InterPro" id="IPR004270">
    <property type="entry name" value="Papilloma_E5_alpha"/>
</dbReference>
<dbReference type="Pfam" id="PF03025">
    <property type="entry name" value="Papilloma_E5"/>
    <property type="match status" value="1"/>
</dbReference>